<name>SYFA_HERA2</name>
<gene>
    <name evidence="1" type="primary">pheS</name>
    <name type="ordered locus">Haur_3836</name>
</gene>
<proteinExistence type="inferred from homology"/>
<organism>
    <name type="scientific">Herpetosiphon aurantiacus (strain ATCC 23779 / DSM 785 / 114-95)</name>
    <dbReference type="NCBI Taxonomy" id="316274"/>
    <lineage>
        <taxon>Bacteria</taxon>
        <taxon>Bacillati</taxon>
        <taxon>Chloroflexota</taxon>
        <taxon>Chloroflexia</taxon>
        <taxon>Herpetosiphonales</taxon>
        <taxon>Herpetosiphonaceae</taxon>
        <taxon>Herpetosiphon</taxon>
    </lineage>
</organism>
<comment type="catalytic activity">
    <reaction evidence="1">
        <text>tRNA(Phe) + L-phenylalanine + ATP = L-phenylalanyl-tRNA(Phe) + AMP + diphosphate + H(+)</text>
        <dbReference type="Rhea" id="RHEA:19413"/>
        <dbReference type="Rhea" id="RHEA-COMP:9668"/>
        <dbReference type="Rhea" id="RHEA-COMP:9699"/>
        <dbReference type="ChEBI" id="CHEBI:15378"/>
        <dbReference type="ChEBI" id="CHEBI:30616"/>
        <dbReference type="ChEBI" id="CHEBI:33019"/>
        <dbReference type="ChEBI" id="CHEBI:58095"/>
        <dbReference type="ChEBI" id="CHEBI:78442"/>
        <dbReference type="ChEBI" id="CHEBI:78531"/>
        <dbReference type="ChEBI" id="CHEBI:456215"/>
        <dbReference type="EC" id="6.1.1.20"/>
    </reaction>
</comment>
<comment type="cofactor">
    <cofactor evidence="1">
        <name>Mg(2+)</name>
        <dbReference type="ChEBI" id="CHEBI:18420"/>
    </cofactor>
    <text evidence="1">Binds 2 magnesium ions per tetramer.</text>
</comment>
<comment type="subunit">
    <text evidence="1">Tetramer of two alpha and two beta subunits.</text>
</comment>
<comment type="subcellular location">
    <subcellularLocation>
        <location evidence="1">Cytoplasm</location>
    </subcellularLocation>
</comment>
<comment type="similarity">
    <text evidence="1">Belongs to the class-II aminoacyl-tRNA synthetase family. Phe-tRNA synthetase alpha subunit type 1 subfamily.</text>
</comment>
<accession>A9B8B9</accession>
<feature type="chain" id="PRO_1000114882" description="Phenylalanine--tRNA ligase alpha subunit">
    <location>
        <begin position="1"/>
        <end position="346"/>
    </location>
</feature>
<feature type="binding site" evidence="1">
    <location>
        <position position="260"/>
    </location>
    <ligand>
        <name>Mg(2+)</name>
        <dbReference type="ChEBI" id="CHEBI:18420"/>
        <note>shared with beta subunit</note>
    </ligand>
</feature>
<keyword id="KW-0030">Aminoacyl-tRNA synthetase</keyword>
<keyword id="KW-0067">ATP-binding</keyword>
<keyword id="KW-0963">Cytoplasm</keyword>
<keyword id="KW-0436">Ligase</keyword>
<keyword id="KW-0460">Magnesium</keyword>
<keyword id="KW-0479">Metal-binding</keyword>
<keyword id="KW-0547">Nucleotide-binding</keyword>
<keyword id="KW-0648">Protein biosynthesis</keyword>
<sequence length="346" mass="39289">MFEQLDQIEKEAAAALASVQSLDDLAAWRTQWTGKKGALAQASQSIGKLDPKDRPAFGQRFGAIKQALSEQETTLEARLQSAALHQELEEDAVDISLPGRAANIGRLHPSTQSLRRIQHIFAEMGFQVWESREVESDEYNFELLNMPAHHPARDMWDTFYVQSDDPHQKVVLRTHTSPGQIHVMRTLNPEPIRVILPGKCYRYEPVSARSEMMFHQVEGLVIGKNITMADLKGTLANFARRMFKDDVKVRYRPSYFPFTEPSVEVDIECFICGGEGCRICKKSGWLEILGAGMVHPTVLRNGGYDPAEWSGFAFGMGPERQTMLRYDIDDIRWFFSNDGRFLEQFG</sequence>
<reference key="1">
    <citation type="journal article" date="2011" name="Stand. Genomic Sci.">
        <title>Complete genome sequence of the filamentous gliding predatory bacterium Herpetosiphon aurantiacus type strain (114-95(T)).</title>
        <authorList>
            <person name="Kiss H."/>
            <person name="Nett M."/>
            <person name="Domin N."/>
            <person name="Martin K."/>
            <person name="Maresca J.A."/>
            <person name="Copeland A."/>
            <person name="Lapidus A."/>
            <person name="Lucas S."/>
            <person name="Berry K.W."/>
            <person name="Glavina Del Rio T."/>
            <person name="Dalin E."/>
            <person name="Tice H."/>
            <person name="Pitluck S."/>
            <person name="Richardson P."/>
            <person name="Bruce D."/>
            <person name="Goodwin L."/>
            <person name="Han C."/>
            <person name="Detter J.C."/>
            <person name="Schmutz J."/>
            <person name="Brettin T."/>
            <person name="Land M."/>
            <person name="Hauser L."/>
            <person name="Kyrpides N.C."/>
            <person name="Ivanova N."/>
            <person name="Goeker M."/>
            <person name="Woyke T."/>
            <person name="Klenk H.P."/>
            <person name="Bryant D.A."/>
        </authorList>
    </citation>
    <scope>NUCLEOTIDE SEQUENCE [LARGE SCALE GENOMIC DNA]</scope>
    <source>
        <strain>ATCC 23779 / DSM 785 / 114-95</strain>
    </source>
</reference>
<evidence type="ECO:0000255" key="1">
    <source>
        <dbReference type="HAMAP-Rule" id="MF_00281"/>
    </source>
</evidence>
<dbReference type="EC" id="6.1.1.20" evidence="1"/>
<dbReference type="EMBL" id="CP000875">
    <property type="protein sequence ID" value="ABX06472.1"/>
    <property type="molecule type" value="Genomic_DNA"/>
</dbReference>
<dbReference type="SMR" id="A9B8B9"/>
<dbReference type="FunCoup" id="A9B8B9">
    <property type="interactions" value="486"/>
</dbReference>
<dbReference type="STRING" id="316274.Haur_3836"/>
<dbReference type="KEGG" id="hau:Haur_3836"/>
<dbReference type="eggNOG" id="COG0016">
    <property type="taxonomic scope" value="Bacteria"/>
</dbReference>
<dbReference type="HOGENOM" id="CLU_025086_0_1_0"/>
<dbReference type="InParanoid" id="A9B8B9"/>
<dbReference type="Proteomes" id="UP000000787">
    <property type="component" value="Chromosome"/>
</dbReference>
<dbReference type="GO" id="GO:0005737">
    <property type="term" value="C:cytoplasm"/>
    <property type="evidence" value="ECO:0007669"/>
    <property type="project" value="UniProtKB-SubCell"/>
</dbReference>
<dbReference type="GO" id="GO:0005524">
    <property type="term" value="F:ATP binding"/>
    <property type="evidence" value="ECO:0007669"/>
    <property type="project" value="UniProtKB-UniRule"/>
</dbReference>
<dbReference type="GO" id="GO:0000287">
    <property type="term" value="F:magnesium ion binding"/>
    <property type="evidence" value="ECO:0007669"/>
    <property type="project" value="UniProtKB-UniRule"/>
</dbReference>
<dbReference type="GO" id="GO:0004826">
    <property type="term" value="F:phenylalanine-tRNA ligase activity"/>
    <property type="evidence" value="ECO:0007669"/>
    <property type="project" value="UniProtKB-UniRule"/>
</dbReference>
<dbReference type="GO" id="GO:0000049">
    <property type="term" value="F:tRNA binding"/>
    <property type="evidence" value="ECO:0007669"/>
    <property type="project" value="InterPro"/>
</dbReference>
<dbReference type="GO" id="GO:0006432">
    <property type="term" value="P:phenylalanyl-tRNA aminoacylation"/>
    <property type="evidence" value="ECO:0007669"/>
    <property type="project" value="UniProtKB-UniRule"/>
</dbReference>
<dbReference type="CDD" id="cd00496">
    <property type="entry name" value="PheRS_alpha_core"/>
    <property type="match status" value="1"/>
</dbReference>
<dbReference type="Gene3D" id="3.30.930.10">
    <property type="entry name" value="Bira Bifunctional Protein, Domain 2"/>
    <property type="match status" value="1"/>
</dbReference>
<dbReference type="HAMAP" id="MF_00281">
    <property type="entry name" value="Phe_tRNA_synth_alpha1"/>
    <property type="match status" value="1"/>
</dbReference>
<dbReference type="InterPro" id="IPR006195">
    <property type="entry name" value="aa-tRNA-synth_II"/>
</dbReference>
<dbReference type="InterPro" id="IPR045864">
    <property type="entry name" value="aa-tRNA-synth_II/BPL/LPL"/>
</dbReference>
<dbReference type="InterPro" id="IPR004529">
    <property type="entry name" value="Phe-tRNA-synth_IIc_asu"/>
</dbReference>
<dbReference type="InterPro" id="IPR004188">
    <property type="entry name" value="Phe-tRNA_ligase_II_N"/>
</dbReference>
<dbReference type="InterPro" id="IPR022911">
    <property type="entry name" value="Phe_tRNA_ligase_alpha1_bac"/>
</dbReference>
<dbReference type="InterPro" id="IPR002319">
    <property type="entry name" value="Phenylalanyl-tRNA_Synthase"/>
</dbReference>
<dbReference type="InterPro" id="IPR010978">
    <property type="entry name" value="tRNA-bd_arm"/>
</dbReference>
<dbReference type="NCBIfam" id="TIGR00468">
    <property type="entry name" value="pheS"/>
    <property type="match status" value="1"/>
</dbReference>
<dbReference type="PANTHER" id="PTHR11538:SF41">
    <property type="entry name" value="PHENYLALANINE--TRNA LIGASE, MITOCHONDRIAL"/>
    <property type="match status" value="1"/>
</dbReference>
<dbReference type="PANTHER" id="PTHR11538">
    <property type="entry name" value="PHENYLALANYL-TRNA SYNTHETASE"/>
    <property type="match status" value="1"/>
</dbReference>
<dbReference type="Pfam" id="PF02912">
    <property type="entry name" value="Phe_tRNA-synt_N"/>
    <property type="match status" value="1"/>
</dbReference>
<dbReference type="Pfam" id="PF01409">
    <property type="entry name" value="tRNA-synt_2d"/>
    <property type="match status" value="1"/>
</dbReference>
<dbReference type="SUPFAM" id="SSF55681">
    <property type="entry name" value="Class II aaRS and biotin synthetases"/>
    <property type="match status" value="1"/>
</dbReference>
<dbReference type="SUPFAM" id="SSF46589">
    <property type="entry name" value="tRNA-binding arm"/>
    <property type="match status" value="1"/>
</dbReference>
<dbReference type="PROSITE" id="PS50862">
    <property type="entry name" value="AA_TRNA_LIGASE_II"/>
    <property type="match status" value="1"/>
</dbReference>
<protein>
    <recommendedName>
        <fullName evidence="1">Phenylalanine--tRNA ligase alpha subunit</fullName>
        <ecNumber evidence="1">6.1.1.20</ecNumber>
    </recommendedName>
    <alternativeName>
        <fullName evidence="1">Phenylalanyl-tRNA synthetase alpha subunit</fullName>
        <shortName evidence="1">PheRS</shortName>
    </alternativeName>
</protein>